<keyword id="KW-0037">Angiogenesis</keyword>
<keyword id="KW-0106">Calcium</keyword>
<keyword id="KW-0175">Coiled coil</keyword>
<keyword id="KW-0217">Developmental protein</keyword>
<keyword id="KW-0221">Differentiation</keyword>
<keyword id="KW-1015">Disulfide bond</keyword>
<keyword id="KW-0325">Glycoprotein</keyword>
<keyword id="KW-0479">Metal-binding</keyword>
<keyword id="KW-1185">Reference proteome</keyword>
<keyword id="KW-0964">Secreted</keyword>
<keyword id="KW-0732">Signal</keyword>
<feature type="signal peptide" evidence="4">
    <location>
        <begin position="1"/>
        <end position="18"/>
    </location>
</feature>
<feature type="chain" id="PRO_0000009115" description="Angiopoietin-2">
    <location>
        <begin position="19"/>
        <end position="496"/>
    </location>
</feature>
<feature type="domain" description="Fibrinogen C-terminal" evidence="5">
    <location>
        <begin position="275"/>
        <end position="495"/>
    </location>
</feature>
<feature type="coiled-coil region" evidence="4">
    <location>
        <begin position="130"/>
        <end position="255"/>
    </location>
</feature>
<feature type="binding site" evidence="2">
    <location>
        <position position="429"/>
    </location>
    <ligand>
        <name>Ca(2+)</name>
        <dbReference type="ChEBI" id="CHEBI:29108"/>
    </ligand>
</feature>
<feature type="binding site" evidence="2">
    <location>
        <position position="431"/>
    </location>
    <ligand>
        <name>Ca(2+)</name>
        <dbReference type="ChEBI" id="CHEBI:29108"/>
    </ligand>
</feature>
<feature type="binding site" evidence="2">
    <location>
        <position position="433"/>
    </location>
    <ligand>
        <name>Ca(2+)</name>
        <dbReference type="ChEBI" id="CHEBI:29108"/>
    </ligand>
</feature>
<feature type="binding site" evidence="2">
    <location>
        <position position="435"/>
    </location>
    <ligand>
        <name>Ca(2+)</name>
        <dbReference type="ChEBI" id="CHEBI:29108"/>
    </ligand>
</feature>
<feature type="glycosylation site" description="N-linked (GlcNAc...) asparagine" evidence="4">
    <location>
        <position position="89"/>
    </location>
</feature>
<feature type="glycosylation site" description="N-linked (GlcNAc...) asparagine" evidence="4">
    <location>
        <position position="119"/>
    </location>
</feature>
<feature type="glycosylation site" description="N-linked (GlcNAc...) asparagine" evidence="4">
    <location>
        <position position="133"/>
    </location>
</feature>
<feature type="glycosylation site" description="N-linked (GlcNAc...) asparagine" evidence="4">
    <location>
        <position position="151"/>
    </location>
</feature>
<feature type="glycosylation site" description="N-linked (GlcNAc...) asparagine" evidence="4">
    <location>
        <position position="240"/>
    </location>
</feature>
<feature type="glycosylation site" description="N-linked (GlcNAc...) asparagine" evidence="4">
    <location>
        <position position="304"/>
    </location>
</feature>
<feature type="disulfide bond" evidence="5">
    <location>
        <begin position="284"/>
        <end position="313"/>
    </location>
</feature>
<feature type="disulfide bond" evidence="5">
    <location>
        <begin position="433"/>
        <end position="435"/>
    </location>
</feature>
<feature type="disulfide bond" evidence="5">
    <location>
        <begin position="437"/>
        <end position="450"/>
    </location>
</feature>
<comment type="function">
    <text evidence="2">Binds to TEK/TIE2, competing for the ANGPT1 binding site, and modulating ANGPT1 signaling (By similarity). Can induce tyrosine phosphorylation of TEK/TIE2 in the absence of ANGPT1 (By similarity). In the absence of angiogenic inducers, such as VEGF, ANGPT2-mediated loosening of cell-matrix contacts may induce endothelial cell apoptosis with consequent vascular regression (By similarity). In concert with VEGF, it may facilitate endothelial cell migration and proliferation, thus serving as a permissive angiogenic signal (By similarity). Involved in the regulation of lymphangiogenesis (By similarity).</text>
</comment>
<comment type="subunit">
    <text evidence="2 3">Interacts with TEK/TIE2, competing for the same binding site as ANGPT1 (By similarity). Interacts with ITGA5 (By similarity). Interacts with SVEP1/polydom (By similarity). Interacts with THBD; this interaction significantly inhibits the generation of activated PC and TAFIa/CPB2 by the thrombin/thrombomodulin complex (By similarity).</text>
</comment>
<comment type="subcellular location">
    <subcellularLocation>
        <location evidence="2">Secreted</location>
    </subcellularLocation>
</comment>
<comment type="domain">
    <text evidence="1">The Fibrinogen C-terminal domain mediates interaction with the TEK/TIE2 receptor.</text>
</comment>
<protein>
    <recommendedName>
        <fullName>Angiopoietin-2</fullName>
        <shortName>ANG-2</shortName>
    </recommendedName>
</protein>
<proteinExistence type="evidence at transcript level"/>
<accession>Q9BDY7</accession>
<evidence type="ECO:0000250" key="1"/>
<evidence type="ECO:0000250" key="2">
    <source>
        <dbReference type="UniProtKB" id="O15123"/>
    </source>
</evidence>
<evidence type="ECO:0000250" key="3">
    <source>
        <dbReference type="UniProtKB" id="O35608"/>
    </source>
</evidence>
<evidence type="ECO:0000255" key="4"/>
<evidence type="ECO:0000255" key="5">
    <source>
        <dbReference type="PROSITE-ProRule" id="PRU00739"/>
    </source>
</evidence>
<dbReference type="EMBL" id="AF233228">
    <property type="protein sequence ID" value="AAK14993.1"/>
    <property type="molecule type" value="mRNA"/>
</dbReference>
<dbReference type="RefSeq" id="NP_998973.1">
    <property type="nucleotide sequence ID" value="NM_213808.1"/>
</dbReference>
<dbReference type="SMR" id="Q9BDY7"/>
<dbReference type="FunCoup" id="Q9BDY7">
    <property type="interactions" value="240"/>
</dbReference>
<dbReference type="STRING" id="9823.ENSSSCP00000067734"/>
<dbReference type="GlyCosmos" id="Q9BDY7">
    <property type="glycosylation" value="6 sites, No reported glycans"/>
</dbReference>
<dbReference type="GlyGen" id="Q9BDY7">
    <property type="glycosylation" value="6 sites"/>
</dbReference>
<dbReference type="PaxDb" id="9823-ENSSSCP00000016694"/>
<dbReference type="GeneID" id="396730"/>
<dbReference type="KEGG" id="ssc:396730"/>
<dbReference type="CTD" id="285"/>
<dbReference type="eggNOG" id="KOG2579">
    <property type="taxonomic scope" value="Eukaryota"/>
</dbReference>
<dbReference type="InParanoid" id="Q9BDY7"/>
<dbReference type="OrthoDB" id="7735366at2759"/>
<dbReference type="Proteomes" id="UP000008227">
    <property type="component" value="Unplaced"/>
</dbReference>
<dbReference type="Proteomes" id="UP000314985">
    <property type="component" value="Unplaced"/>
</dbReference>
<dbReference type="Proteomes" id="UP000694570">
    <property type="component" value="Unplaced"/>
</dbReference>
<dbReference type="Proteomes" id="UP000694571">
    <property type="component" value="Unplaced"/>
</dbReference>
<dbReference type="Proteomes" id="UP000694720">
    <property type="component" value="Unplaced"/>
</dbReference>
<dbReference type="Proteomes" id="UP000694722">
    <property type="component" value="Unplaced"/>
</dbReference>
<dbReference type="Proteomes" id="UP000694723">
    <property type="component" value="Unplaced"/>
</dbReference>
<dbReference type="Proteomes" id="UP000694724">
    <property type="component" value="Unplaced"/>
</dbReference>
<dbReference type="Proteomes" id="UP000694725">
    <property type="component" value="Unplaced"/>
</dbReference>
<dbReference type="Proteomes" id="UP000694726">
    <property type="component" value="Unplaced"/>
</dbReference>
<dbReference type="Proteomes" id="UP000694727">
    <property type="component" value="Unplaced"/>
</dbReference>
<dbReference type="Proteomes" id="UP000694728">
    <property type="component" value="Unplaced"/>
</dbReference>
<dbReference type="GO" id="GO:0062023">
    <property type="term" value="C:collagen-containing extracellular matrix"/>
    <property type="evidence" value="ECO:0000318"/>
    <property type="project" value="GO_Central"/>
</dbReference>
<dbReference type="GO" id="GO:0005615">
    <property type="term" value="C:extracellular space"/>
    <property type="evidence" value="ECO:0000318"/>
    <property type="project" value="GO_Central"/>
</dbReference>
<dbReference type="GO" id="GO:0046872">
    <property type="term" value="F:metal ion binding"/>
    <property type="evidence" value="ECO:0007669"/>
    <property type="project" value="UniProtKB-KW"/>
</dbReference>
<dbReference type="GO" id="GO:0030971">
    <property type="term" value="F:receptor tyrosine kinase binding"/>
    <property type="evidence" value="ECO:0000318"/>
    <property type="project" value="GO_Central"/>
</dbReference>
<dbReference type="GO" id="GO:0001525">
    <property type="term" value="P:angiogenesis"/>
    <property type="evidence" value="ECO:0000318"/>
    <property type="project" value="GO_Central"/>
</dbReference>
<dbReference type="GO" id="GO:0007596">
    <property type="term" value="P:blood coagulation"/>
    <property type="evidence" value="ECO:0007669"/>
    <property type="project" value="InterPro"/>
</dbReference>
<dbReference type="GO" id="GO:0030154">
    <property type="term" value="P:cell differentiation"/>
    <property type="evidence" value="ECO:0007669"/>
    <property type="project" value="UniProtKB-KW"/>
</dbReference>
<dbReference type="GO" id="GO:0048014">
    <property type="term" value="P:Tie signaling pathway"/>
    <property type="evidence" value="ECO:0000318"/>
    <property type="project" value="GO_Central"/>
</dbReference>
<dbReference type="CDD" id="cd00087">
    <property type="entry name" value="FReD"/>
    <property type="match status" value="1"/>
</dbReference>
<dbReference type="FunFam" id="4.10.530.10:FF:000001">
    <property type="entry name" value="angiopoietin-2 isoform X1"/>
    <property type="match status" value="1"/>
</dbReference>
<dbReference type="FunFam" id="3.90.215.10:FF:000001">
    <property type="entry name" value="Tenascin isoform 1"/>
    <property type="match status" value="1"/>
</dbReference>
<dbReference type="Gene3D" id="3.90.215.10">
    <property type="entry name" value="Gamma Fibrinogen, chain A, domain 1"/>
    <property type="match status" value="1"/>
</dbReference>
<dbReference type="Gene3D" id="4.10.530.10">
    <property type="entry name" value="Gamma-fibrinogen Carboxyl Terminal Fragment, domain 2"/>
    <property type="match status" value="1"/>
</dbReference>
<dbReference type="InterPro" id="IPR037579">
    <property type="entry name" value="FIB_ANG-like"/>
</dbReference>
<dbReference type="InterPro" id="IPR036056">
    <property type="entry name" value="Fibrinogen-like_C"/>
</dbReference>
<dbReference type="InterPro" id="IPR014716">
    <property type="entry name" value="Fibrinogen_a/b/g_C_1"/>
</dbReference>
<dbReference type="InterPro" id="IPR002181">
    <property type="entry name" value="Fibrinogen_a/b/g_C_dom"/>
</dbReference>
<dbReference type="InterPro" id="IPR020837">
    <property type="entry name" value="Fibrinogen_CS"/>
</dbReference>
<dbReference type="NCBIfam" id="NF040941">
    <property type="entry name" value="GGGWT_bact"/>
    <property type="match status" value="1"/>
</dbReference>
<dbReference type="PANTHER" id="PTHR47221">
    <property type="entry name" value="FIBRINOGEN ALPHA CHAIN"/>
    <property type="match status" value="1"/>
</dbReference>
<dbReference type="PANTHER" id="PTHR47221:SF6">
    <property type="entry name" value="FIBRINOGEN ALPHA CHAIN"/>
    <property type="match status" value="1"/>
</dbReference>
<dbReference type="Pfam" id="PF25443">
    <property type="entry name" value="ANG-1"/>
    <property type="match status" value="1"/>
</dbReference>
<dbReference type="Pfam" id="PF00147">
    <property type="entry name" value="Fibrinogen_C"/>
    <property type="match status" value="1"/>
</dbReference>
<dbReference type="SMART" id="SM00186">
    <property type="entry name" value="FBG"/>
    <property type="match status" value="1"/>
</dbReference>
<dbReference type="SUPFAM" id="SSF56496">
    <property type="entry name" value="Fibrinogen C-terminal domain-like"/>
    <property type="match status" value="1"/>
</dbReference>
<dbReference type="PROSITE" id="PS00514">
    <property type="entry name" value="FIBRINOGEN_C_1"/>
    <property type="match status" value="1"/>
</dbReference>
<dbReference type="PROSITE" id="PS51406">
    <property type="entry name" value="FIBRINOGEN_C_2"/>
    <property type="match status" value="1"/>
</dbReference>
<name>ANGP2_PIG</name>
<organism>
    <name type="scientific">Sus scrofa</name>
    <name type="common">Pig</name>
    <dbReference type="NCBI Taxonomy" id="9823"/>
    <lineage>
        <taxon>Eukaryota</taxon>
        <taxon>Metazoa</taxon>
        <taxon>Chordata</taxon>
        <taxon>Craniata</taxon>
        <taxon>Vertebrata</taxon>
        <taxon>Euteleostomi</taxon>
        <taxon>Mammalia</taxon>
        <taxon>Eutheria</taxon>
        <taxon>Laurasiatheria</taxon>
        <taxon>Artiodactyla</taxon>
        <taxon>Suina</taxon>
        <taxon>Suidae</taxon>
        <taxon>Sus</taxon>
    </lineage>
</organism>
<sequence length="496" mass="56911">MWQLVFFALSCDLVLAAAYNNFRKSMDSTGKRQYQVQHGPCSYTFLLPETDNCRSPSSSYVSNAVQRDAPLDYDDSVRRLQVLENIMENNTQWLMKLESYIQDNMKKEMVEIQQNAVQNQTAVMIEIGTNLLNQTAEQTRKLTDVEAQVLNQTTRLELQLLEHSLSTNKLEKQILDQTSEINKLQDKNSFLEKKVLDMEDKHIVQLQSIKEEKDQLQVLVSKQNSIIEELEKQLVTATVNNSVLQKQQHDLMETVHNLLTMISTSNSAKHSLVAKEEQIIFRDCAEAFKSGLTTSGTYTLTFPNSTEETKAYCDMETGGGGWTVIQRREDGSVDFQRTWKEYKMGFGSPSGEHWLGNEFVSQVTNQKRYVLKIHLRDWEGNEAYSLYEHFYLSSEEFNYRIHLKGLTGTAGKISSISQPGNDFSTKDADNDKCICKCSQMLTGGWWFDACGPSNLNGMYYPQRQNTNKFNGIKWYYWKGSGYSLKATTMMIRPADF</sequence>
<reference key="1">
    <citation type="journal article" date="2001" name="Cardiovasc. Res.">
        <title>The angiopoietin-tie2 system in coronary artery endothelium prevents oxidized low-density lipoprotein-induced apoptosis.</title>
        <authorList>
            <person name="Kim I."/>
            <person name="Moon S.O."/>
            <person name="Han C.Y."/>
            <person name="Pak Y.K."/>
            <person name="Moon S.K."/>
            <person name="Kim J.J."/>
            <person name="Koh G.Y."/>
        </authorList>
    </citation>
    <scope>NUCLEOTIDE SEQUENCE [MRNA]</scope>
</reference>
<gene>
    <name type="primary">ANGPT2</name>
</gene>